<comment type="function">
    <text evidence="1">Forms part of the ribosomal stalk which helps the ribosome interact with GTP-bound translation factors. Is thus essential for accurate translation.</text>
</comment>
<comment type="subunit">
    <text evidence="1">Homodimer. Part of the ribosomal stalk of the 50S ribosomal subunit. Forms a multimeric L10(L12)X complex, where L10 forms an elongated spine to which 2 to 4 L12 dimers bind in a sequential fashion. Binds GTP-bound translation factors.</text>
</comment>
<comment type="similarity">
    <text evidence="1">Belongs to the bacterial ribosomal protein bL12 family.</text>
</comment>
<evidence type="ECO:0000255" key="1">
    <source>
        <dbReference type="HAMAP-Rule" id="MF_00368"/>
    </source>
</evidence>
<evidence type="ECO:0000305" key="2"/>
<organism>
    <name type="scientific">Staphylococcus aureus (strain N315)</name>
    <dbReference type="NCBI Taxonomy" id="158879"/>
    <lineage>
        <taxon>Bacteria</taxon>
        <taxon>Bacillati</taxon>
        <taxon>Bacillota</taxon>
        <taxon>Bacilli</taxon>
        <taxon>Bacillales</taxon>
        <taxon>Staphylococcaceae</taxon>
        <taxon>Staphylococcus</taxon>
    </lineage>
</organism>
<sequence>MANHEQIIEAIKEMSVLELNDLVKAIEEEFGVTAAAPVAVAGAAGGADAAAEKTEFDVELTSAGSSKIKVVKAVKEATGLGLKDAKELVDGAPKVIKEALPKEEAEKLKEQLEEVGATVELK</sequence>
<name>RL7_STAAN</name>
<keyword id="KW-0687">Ribonucleoprotein</keyword>
<keyword id="KW-0689">Ribosomal protein</keyword>
<dbReference type="EMBL" id="BA000018">
    <property type="protein sequence ID" value="BAB41729.1"/>
    <property type="molecule type" value="Genomic_DNA"/>
</dbReference>
<dbReference type="PIR" id="F89821">
    <property type="entry name" value="F89821"/>
</dbReference>
<dbReference type="RefSeq" id="WP_001273586.1">
    <property type="nucleotide sequence ID" value="NC_002745.2"/>
</dbReference>
<dbReference type="SMR" id="P99154"/>
<dbReference type="EnsemblBacteria" id="BAB41729">
    <property type="protein sequence ID" value="BAB41729"/>
    <property type="gene ID" value="BAB41729"/>
</dbReference>
<dbReference type="GeneID" id="98344874"/>
<dbReference type="KEGG" id="sau:SA0498"/>
<dbReference type="HOGENOM" id="CLU_086499_3_2_9"/>
<dbReference type="GO" id="GO:0022625">
    <property type="term" value="C:cytosolic large ribosomal subunit"/>
    <property type="evidence" value="ECO:0007669"/>
    <property type="project" value="TreeGrafter"/>
</dbReference>
<dbReference type="GO" id="GO:0003729">
    <property type="term" value="F:mRNA binding"/>
    <property type="evidence" value="ECO:0007669"/>
    <property type="project" value="TreeGrafter"/>
</dbReference>
<dbReference type="GO" id="GO:0003735">
    <property type="term" value="F:structural constituent of ribosome"/>
    <property type="evidence" value="ECO:0007669"/>
    <property type="project" value="InterPro"/>
</dbReference>
<dbReference type="GO" id="GO:0006412">
    <property type="term" value="P:translation"/>
    <property type="evidence" value="ECO:0007669"/>
    <property type="project" value="UniProtKB-UniRule"/>
</dbReference>
<dbReference type="CDD" id="cd00387">
    <property type="entry name" value="Ribosomal_L7_L12"/>
    <property type="match status" value="1"/>
</dbReference>
<dbReference type="FunFam" id="1.20.5.710:FF:000002">
    <property type="entry name" value="50S ribosomal protein L7/L12"/>
    <property type="match status" value="1"/>
</dbReference>
<dbReference type="FunFam" id="3.30.1390.10:FF:000001">
    <property type="entry name" value="50S ribosomal protein L7/L12"/>
    <property type="match status" value="1"/>
</dbReference>
<dbReference type="Gene3D" id="3.30.1390.10">
    <property type="match status" value="1"/>
</dbReference>
<dbReference type="Gene3D" id="1.20.5.710">
    <property type="entry name" value="Single helix bin"/>
    <property type="match status" value="1"/>
</dbReference>
<dbReference type="HAMAP" id="MF_00368">
    <property type="entry name" value="Ribosomal_bL12"/>
    <property type="match status" value="1"/>
</dbReference>
<dbReference type="InterPro" id="IPR000206">
    <property type="entry name" value="Ribosomal_bL12"/>
</dbReference>
<dbReference type="InterPro" id="IPR013823">
    <property type="entry name" value="Ribosomal_bL12_C"/>
</dbReference>
<dbReference type="InterPro" id="IPR014719">
    <property type="entry name" value="Ribosomal_bL12_C/ClpS-like"/>
</dbReference>
<dbReference type="InterPro" id="IPR008932">
    <property type="entry name" value="Ribosomal_bL12_oligo"/>
</dbReference>
<dbReference type="InterPro" id="IPR036235">
    <property type="entry name" value="Ribosomal_bL12_oligo_N_sf"/>
</dbReference>
<dbReference type="NCBIfam" id="TIGR00855">
    <property type="entry name" value="L12"/>
    <property type="match status" value="1"/>
</dbReference>
<dbReference type="PANTHER" id="PTHR45987">
    <property type="entry name" value="39S RIBOSOMAL PROTEIN L12"/>
    <property type="match status" value="1"/>
</dbReference>
<dbReference type="PANTHER" id="PTHR45987:SF4">
    <property type="entry name" value="LARGE RIBOSOMAL SUBUNIT PROTEIN BL12M"/>
    <property type="match status" value="1"/>
</dbReference>
<dbReference type="Pfam" id="PF00542">
    <property type="entry name" value="Ribosomal_L12"/>
    <property type="match status" value="1"/>
</dbReference>
<dbReference type="Pfam" id="PF16320">
    <property type="entry name" value="Ribosomal_L12_N"/>
    <property type="match status" value="1"/>
</dbReference>
<dbReference type="SUPFAM" id="SSF54736">
    <property type="entry name" value="ClpS-like"/>
    <property type="match status" value="1"/>
</dbReference>
<dbReference type="SUPFAM" id="SSF48300">
    <property type="entry name" value="Ribosomal protein L7/12, oligomerisation (N-terminal) domain"/>
    <property type="match status" value="1"/>
</dbReference>
<feature type="chain" id="PRO_0000157576" description="Large ribosomal subunit protein bL12">
    <location>
        <begin position="1"/>
        <end position="122"/>
    </location>
</feature>
<proteinExistence type="evidence at protein level"/>
<gene>
    <name evidence="1" type="primary">rplL</name>
    <name type="ordered locus">SA0498</name>
</gene>
<protein>
    <recommendedName>
        <fullName evidence="1">Large ribosomal subunit protein bL12</fullName>
    </recommendedName>
    <alternativeName>
        <fullName evidence="2">50S ribosomal protein L7/L12</fullName>
    </alternativeName>
</protein>
<reference key="1">
    <citation type="journal article" date="2001" name="Lancet">
        <title>Whole genome sequencing of meticillin-resistant Staphylococcus aureus.</title>
        <authorList>
            <person name="Kuroda M."/>
            <person name="Ohta T."/>
            <person name="Uchiyama I."/>
            <person name="Baba T."/>
            <person name="Yuzawa H."/>
            <person name="Kobayashi I."/>
            <person name="Cui L."/>
            <person name="Oguchi A."/>
            <person name="Aoki K."/>
            <person name="Nagai Y."/>
            <person name="Lian J.-Q."/>
            <person name="Ito T."/>
            <person name="Kanamori M."/>
            <person name="Matsumaru H."/>
            <person name="Maruyama A."/>
            <person name="Murakami H."/>
            <person name="Hosoyama A."/>
            <person name="Mizutani-Ui Y."/>
            <person name="Takahashi N.K."/>
            <person name="Sawano T."/>
            <person name="Inoue R."/>
            <person name="Kaito C."/>
            <person name="Sekimizu K."/>
            <person name="Hirakawa H."/>
            <person name="Kuhara S."/>
            <person name="Goto S."/>
            <person name="Yabuzaki J."/>
            <person name="Kanehisa M."/>
            <person name="Yamashita A."/>
            <person name="Oshima K."/>
            <person name="Furuya K."/>
            <person name="Yoshino C."/>
            <person name="Shiba T."/>
            <person name="Hattori M."/>
            <person name="Ogasawara N."/>
            <person name="Hayashi H."/>
            <person name="Hiramatsu K."/>
        </authorList>
    </citation>
    <scope>NUCLEOTIDE SEQUENCE [LARGE SCALE GENOMIC DNA]</scope>
    <source>
        <strain>N315</strain>
    </source>
</reference>
<reference key="2">
    <citation type="journal article" date="2005" name="J. Microbiol. Methods">
        <title>Correlation of proteomic and transcriptomic profiles of Staphylococcus aureus during the post-exponential phase of growth.</title>
        <authorList>
            <person name="Scherl A."/>
            <person name="Francois P."/>
            <person name="Bento M."/>
            <person name="Deshusses J.M."/>
            <person name="Charbonnier Y."/>
            <person name="Converset V."/>
            <person name="Huyghe A."/>
            <person name="Walter N."/>
            <person name="Hoogland C."/>
            <person name="Appel R.D."/>
            <person name="Sanchez J.-C."/>
            <person name="Zimmermann-Ivol C.G."/>
            <person name="Corthals G.L."/>
            <person name="Hochstrasser D.F."/>
            <person name="Schrenzel J."/>
        </authorList>
    </citation>
    <scope>IDENTIFICATION BY MASS SPECTROMETRY</scope>
    <source>
        <strain>N315</strain>
    </source>
</reference>
<reference key="3">
    <citation type="submission" date="2007-10" db="UniProtKB">
        <title>Shotgun proteomic analysis of total and membrane protein extracts of S. aureus strain N315.</title>
        <authorList>
            <person name="Vaezzadeh A.R."/>
            <person name="Deshusses J."/>
            <person name="Lescuyer P."/>
            <person name="Hochstrasser D.F."/>
        </authorList>
    </citation>
    <scope>IDENTIFICATION BY MASS SPECTROMETRY [LARGE SCALE ANALYSIS]</scope>
    <source>
        <strain>N315</strain>
    </source>
</reference>
<accession>P99154</accession>
<accession>Q99W66</accession>